<organism>
    <name type="scientific">Chromohalobacter salexigens (strain ATCC BAA-138 / DSM 3043 / CIP 106854 / NCIMB 13768 / 1H11)</name>
    <dbReference type="NCBI Taxonomy" id="290398"/>
    <lineage>
        <taxon>Bacteria</taxon>
        <taxon>Pseudomonadati</taxon>
        <taxon>Pseudomonadota</taxon>
        <taxon>Gammaproteobacteria</taxon>
        <taxon>Oceanospirillales</taxon>
        <taxon>Halomonadaceae</taxon>
        <taxon>Chromohalobacter</taxon>
    </lineage>
</organism>
<evidence type="ECO:0000255" key="1">
    <source>
        <dbReference type="HAMAP-Rule" id="MF_00014"/>
    </source>
</evidence>
<gene>
    <name evidence="1" type="primary">rimM</name>
    <name type="ordered locus">Csal_3015</name>
</gene>
<keyword id="KW-0143">Chaperone</keyword>
<keyword id="KW-0963">Cytoplasm</keyword>
<keyword id="KW-1185">Reference proteome</keyword>
<keyword id="KW-0690">Ribosome biogenesis</keyword>
<keyword id="KW-0698">rRNA processing</keyword>
<protein>
    <recommendedName>
        <fullName evidence="1">Ribosome maturation factor RimM</fullName>
    </recommendedName>
</protein>
<reference key="1">
    <citation type="journal article" date="2011" name="Stand. Genomic Sci.">
        <title>Complete genome sequence of the halophilic and highly halotolerant Chromohalobacter salexigens type strain (1H11(T)).</title>
        <authorList>
            <person name="Copeland A."/>
            <person name="O'Connor K."/>
            <person name="Lucas S."/>
            <person name="Lapidus A."/>
            <person name="Berry K.W."/>
            <person name="Detter J.C."/>
            <person name="Del Rio T.G."/>
            <person name="Hammon N."/>
            <person name="Dalin E."/>
            <person name="Tice H."/>
            <person name="Pitluck S."/>
            <person name="Bruce D."/>
            <person name="Goodwin L."/>
            <person name="Han C."/>
            <person name="Tapia R."/>
            <person name="Saunders E."/>
            <person name="Schmutz J."/>
            <person name="Brettin T."/>
            <person name="Larimer F."/>
            <person name="Land M."/>
            <person name="Hauser L."/>
            <person name="Vargas C."/>
            <person name="Nieto J.J."/>
            <person name="Kyrpides N.C."/>
            <person name="Ivanova N."/>
            <person name="Goker M."/>
            <person name="Klenk H.P."/>
            <person name="Csonka L.N."/>
            <person name="Woyke T."/>
        </authorList>
    </citation>
    <scope>NUCLEOTIDE SEQUENCE [LARGE SCALE GENOMIC DNA]</scope>
    <source>
        <strain>ATCC BAA-138 / DSM 3043 / CIP 106854 / NCIMB 13768 / 1H11</strain>
    </source>
</reference>
<feature type="chain" id="PRO_0000351746" description="Ribosome maturation factor RimM">
    <location>
        <begin position="1"/>
        <end position="184"/>
    </location>
</feature>
<feature type="domain" description="PRC barrel" evidence="1">
    <location>
        <begin position="106"/>
        <end position="184"/>
    </location>
</feature>
<proteinExistence type="inferred from homology"/>
<comment type="function">
    <text evidence="1">An accessory protein needed during the final step in the assembly of 30S ribosomal subunit, possibly for assembly of the head region. Essential for efficient processing of 16S rRNA. May be needed both before and after RbfA during the maturation of 16S rRNA. It has affinity for free ribosomal 30S subunits but not for 70S ribosomes.</text>
</comment>
<comment type="subunit">
    <text evidence="1">Binds ribosomal protein uS19.</text>
</comment>
<comment type="subcellular location">
    <subcellularLocation>
        <location evidence="1">Cytoplasm</location>
    </subcellularLocation>
</comment>
<comment type="domain">
    <text evidence="1">The PRC barrel domain binds ribosomal protein uS19.</text>
</comment>
<comment type="similarity">
    <text evidence="1">Belongs to the RimM family.</text>
</comment>
<dbReference type="EMBL" id="CP000285">
    <property type="protein sequence ID" value="ABE60359.1"/>
    <property type="molecule type" value="Genomic_DNA"/>
</dbReference>
<dbReference type="RefSeq" id="WP_011508305.1">
    <property type="nucleotide sequence ID" value="NC_007963.1"/>
</dbReference>
<dbReference type="SMR" id="Q1QT49"/>
<dbReference type="STRING" id="290398.Csal_3015"/>
<dbReference type="GeneID" id="95335703"/>
<dbReference type="KEGG" id="csa:Csal_3015"/>
<dbReference type="eggNOG" id="COG0806">
    <property type="taxonomic scope" value="Bacteria"/>
</dbReference>
<dbReference type="HOGENOM" id="CLU_077636_1_0_6"/>
<dbReference type="OrthoDB" id="9783509at2"/>
<dbReference type="Proteomes" id="UP000000239">
    <property type="component" value="Chromosome"/>
</dbReference>
<dbReference type="GO" id="GO:0005737">
    <property type="term" value="C:cytoplasm"/>
    <property type="evidence" value="ECO:0007669"/>
    <property type="project" value="UniProtKB-SubCell"/>
</dbReference>
<dbReference type="GO" id="GO:0005840">
    <property type="term" value="C:ribosome"/>
    <property type="evidence" value="ECO:0007669"/>
    <property type="project" value="InterPro"/>
</dbReference>
<dbReference type="GO" id="GO:0043022">
    <property type="term" value="F:ribosome binding"/>
    <property type="evidence" value="ECO:0007669"/>
    <property type="project" value="InterPro"/>
</dbReference>
<dbReference type="GO" id="GO:0042274">
    <property type="term" value="P:ribosomal small subunit biogenesis"/>
    <property type="evidence" value="ECO:0007669"/>
    <property type="project" value="UniProtKB-UniRule"/>
</dbReference>
<dbReference type="GO" id="GO:0006364">
    <property type="term" value="P:rRNA processing"/>
    <property type="evidence" value="ECO:0007669"/>
    <property type="project" value="UniProtKB-UniRule"/>
</dbReference>
<dbReference type="Gene3D" id="2.30.30.240">
    <property type="entry name" value="PRC-barrel domain"/>
    <property type="match status" value="1"/>
</dbReference>
<dbReference type="Gene3D" id="2.40.30.60">
    <property type="entry name" value="RimM"/>
    <property type="match status" value="1"/>
</dbReference>
<dbReference type="HAMAP" id="MF_00014">
    <property type="entry name" value="Ribosome_mat_RimM"/>
    <property type="match status" value="1"/>
</dbReference>
<dbReference type="InterPro" id="IPR011033">
    <property type="entry name" value="PRC_barrel-like_sf"/>
</dbReference>
<dbReference type="InterPro" id="IPR056792">
    <property type="entry name" value="PRC_RimM"/>
</dbReference>
<dbReference type="InterPro" id="IPR011961">
    <property type="entry name" value="RimM"/>
</dbReference>
<dbReference type="InterPro" id="IPR002676">
    <property type="entry name" value="RimM_N"/>
</dbReference>
<dbReference type="InterPro" id="IPR036976">
    <property type="entry name" value="RimM_N_sf"/>
</dbReference>
<dbReference type="InterPro" id="IPR009000">
    <property type="entry name" value="Transl_B-barrel_sf"/>
</dbReference>
<dbReference type="NCBIfam" id="TIGR02273">
    <property type="entry name" value="16S_RimM"/>
    <property type="match status" value="1"/>
</dbReference>
<dbReference type="PANTHER" id="PTHR33692">
    <property type="entry name" value="RIBOSOME MATURATION FACTOR RIMM"/>
    <property type="match status" value="1"/>
</dbReference>
<dbReference type="PANTHER" id="PTHR33692:SF1">
    <property type="entry name" value="RIBOSOME MATURATION FACTOR RIMM"/>
    <property type="match status" value="1"/>
</dbReference>
<dbReference type="Pfam" id="PF24986">
    <property type="entry name" value="PRC_RimM"/>
    <property type="match status" value="1"/>
</dbReference>
<dbReference type="Pfam" id="PF01782">
    <property type="entry name" value="RimM"/>
    <property type="match status" value="1"/>
</dbReference>
<dbReference type="SUPFAM" id="SSF50346">
    <property type="entry name" value="PRC-barrel domain"/>
    <property type="match status" value="1"/>
</dbReference>
<dbReference type="SUPFAM" id="SSF50447">
    <property type="entry name" value="Translation proteins"/>
    <property type="match status" value="1"/>
</dbReference>
<sequence length="184" mass="20513">MSHETGGADTAQDDEHVVLGRLTSPYGVKGWLKVYSYTSPIEGIFEHAEWVLSKRGERRACKLSQGRPHGKGLVASLEGISSRELAEQWAGADILLPKQALPALAPGDYYWYQLEGLRVETLDGECLGQVNYLFETGANDVLVIRPSEASLDERERLLPFLPDDVIRQVDLDAGRMIVDWDPEF</sequence>
<accession>Q1QT49</accession>
<name>RIMM_CHRSD</name>